<feature type="chain" id="PRO_0000383651" description="Outer kinetochore KNL1 complex subunit knl-1">
    <location>
        <begin position="1"/>
        <end position="957"/>
    </location>
</feature>
<feature type="repeat" description="1" evidence="4">
    <location>
        <begin position="87"/>
        <end position="90"/>
    </location>
</feature>
<feature type="repeat" description="2" evidence="4">
    <location>
        <begin position="109"/>
        <end position="112"/>
    </location>
</feature>
<feature type="repeat" description="3" evidence="4">
    <location>
        <begin position="206"/>
        <end position="209"/>
    </location>
</feature>
<feature type="repeat" description="4" evidence="4">
    <location>
        <begin position="251"/>
        <end position="254"/>
    </location>
</feature>
<feature type="repeat" description="5" evidence="4">
    <location>
        <begin position="282"/>
        <end position="285"/>
    </location>
</feature>
<feature type="repeat" description="6" evidence="4">
    <location>
        <begin position="326"/>
        <end position="329"/>
    </location>
</feature>
<feature type="repeat" description="7" evidence="4">
    <location>
        <begin position="367"/>
        <end position="370"/>
    </location>
</feature>
<feature type="repeat" description="8" evidence="4">
    <location>
        <begin position="390"/>
        <end position="393"/>
    </location>
</feature>
<feature type="region of interest" description="8 X 4 AA repeats of M-[D/E]-[I/L/M]-[S/T]" evidence="4">
    <location>
        <begin position="87"/>
        <end position="393"/>
    </location>
</feature>
<feature type="region of interest" description="Disordered" evidence="3">
    <location>
        <begin position="89"/>
        <end position="111"/>
    </location>
</feature>
<feature type="region of interest" description="Disordered" evidence="3">
    <location>
        <begin position="476"/>
        <end position="504"/>
    </location>
</feature>
<feature type="coiled-coil region" evidence="2">
    <location>
        <begin position="830"/>
        <end position="950"/>
    </location>
</feature>
<feature type="compositionally biased region" description="Polar residues" evidence="3">
    <location>
        <begin position="91"/>
        <end position="106"/>
    </location>
</feature>
<protein>
    <recommendedName>
        <fullName evidence="4">Outer kinetochore KNL1 complex subunit knl-1</fullName>
    </recommendedName>
    <alternativeName>
        <fullName evidence="1">Kinetochore null protein 1</fullName>
    </alternativeName>
</protein>
<keyword id="KW-0131">Cell cycle</keyword>
<keyword id="KW-0132">Cell division</keyword>
<keyword id="KW-0137">Centromere</keyword>
<keyword id="KW-0158">Chromosome</keyword>
<keyword id="KW-0159">Chromosome partition</keyword>
<keyword id="KW-0175">Coiled coil</keyword>
<keyword id="KW-0963">Cytoplasm</keyword>
<keyword id="KW-0995">Kinetochore</keyword>
<keyword id="KW-0469">Meiosis</keyword>
<keyword id="KW-0498">Mitosis</keyword>
<keyword id="KW-1185">Reference proteome</keyword>
<keyword id="KW-0677">Repeat</keyword>
<comment type="function">
    <text evidence="1">Acts as a component of the outer kinetochore KNL1 complex that serves as a docking point for spindle assembly checkpoint components and mediates microtubule-kinetochore interactions. Kinetochores, consisting of a centromere-associated inner segment and a microtubule-contacting outer segment, play a crucial role in chromosome segregation by mediating the physical connection between centromeric DNA and spindle microtubules. The outer kinetochore is made up of the ten-subunit KMN network, comprising the MIS12, NDC80 and KNL1 complexes, and auxiliary microtubule-associated components; together they connect the outer kinetochore with the inner kinetochore, bind microtubules, and mediate interactions with mitotic checkpoint proteins that delay anaphase until chromosomes are bioriented on the spindle. Binds the protein phosphatase 1 catalytic subunits gsp-1 and gsp-2, which has a role in delaying formation of load-bearing kinetochore-microtubule attachments. Required for the recruitment of spindle-assembly checkpoint components bub-1 and mdf-1/2 to unattached kinetochores. Binds microtubules which plays a role in silencing of the spindle assembly checkpoint, but not the formation of load-bearing microtubule-kinetochore attachments. Has a role in the correct localization of the spindly-like protein spdl-1 and the RZZ complex that is composed of rod-1, czw-1 and zwl-1 to kinetochores.</text>
</comment>
<comment type="subunit">
    <text evidence="1">Component of the KNL1 complex composed of knl-1 and kbp-5. Part of the ten-subunit outer kinetochore KMN network that includes the KNL1, MIS12 and NDC80 complexes. Interacts with the protein phosphatase 1 (PP1) catalytic subunit gsp-1; the interaction is direct. Interacts with the protein phosphatase 1 (PP1) catalytic subunit gsp-2; the interaction is direct. Interacts with the MIS12 complex subunits kbp-1, kbp-2 and mis-12. Interacts with the NDC80 complex components ndc-80 and him-10. Interacts with knl-3. Interacts with kbp-3. Interacts with kbp-4. Interacts with kbp-5.</text>
</comment>
<comment type="subcellular location">
    <subcellularLocation>
        <location evidence="1">Cytoplasm</location>
        <location evidence="1">Cell cortex</location>
    </subcellularLocation>
    <subcellularLocation>
        <location evidence="1">Chromosome</location>
        <location evidence="1">Centromere</location>
        <location evidence="1">Kinetochore</location>
    </subcellularLocation>
    <text evidence="1">Also found on the surface of chromosomes. Subcellular localization dependent on expression of hcp-3, hcp-4, knl-3 and knl-2. During anaphase of meiosis I, localized also to spindle-associated rod-shaped structures which depends on zwl-1.</text>
</comment>
<comment type="domain">
    <text evidence="1">The N-terminus contains a number of repeats which contribute additively to bub-1 recruitment to unattached kinetochores. The repeats are not required for localization to kinetochores.</text>
</comment>
<evidence type="ECO:0000250" key="1">
    <source>
        <dbReference type="UniProtKB" id="P34278"/>
    </source>
</evidence>
<evidence type="ECO:0000255" key="2"/>
<evidence type="ECO:0000256" key="3">
    <source>
        <dbReference type="SAM" id="MobiDB-lite"/>
    </source>
</evidence>
<evidence type="ECO:0000305" key="4"/>
<evidence type="ECO:0000312" key="5">
    <source>
        <dbReference type="EMBL" id="CAP21173.1"/>
    </source>
</evidence>
<reference evidence="5" key="1">
    <citation type="journal article" date="2003" name="PLoS Biol.">
        <title>The genome sequence of Caenorhabditis briggsae: a platform for comparative genomics.</title>
        <authorList>
            <person name="Stein L.D."/>
            <person name="Bao Z."/>
            <person name="Blasiar D."/>
            <person name="Blumenthal T."/>
            <person name="Brent M.R."/>
            <person name="Chen N."/>
            <person name="Chinwalla A."/>
            <person name="Clarke L."/>
            <person name="Clee C."/>
            <person name="Coghlan A."/>
            <person name="Coulson A."/>
            <person name="D'Eustachio P."/>
            <person name="Fitch D.H.A."/>
            <person name="Fulton L.A."/>
            <person name="Fulton R.E."/>
            <person name="Griffiths-Jones S."/>
            <person name="Harris T.W."/>
            <person name="Hillier L.W."/>
            <person name="Kamath R."/>
            <person name="Kuwabara P.E."/>
            <person name="Mardis E.R."/>
            <person name="Marra M.A."/>
            <person name="Miner T.L."/>
            <person name="Minx P."/>
            <person name="Mullikin J.C."/>
            <person name="Plumb R.W."/>
            <person name="Rogers J."/>
            <person name="Schein J.E."/>
            <person name="Sohrmann M."/>
            <person name="Spieth J."/>
            <person name="Stajich J.E."/>
            <person name="Wei C."/>
            <person name="Willey D."/>
            <person name="Wilson R.K."/>
            <person name="Durbin R.M."/>
            <person name="Waterston R.H."/>
        </authorList>
    </citation>
    <scope>NUCLEOTIDE SEQUENCE [LARGE SCALE GENOMIC DNA]</scope>
    <source>
        <strain evidence="5">AF16</strain>
    </source>
</reference>
<accession>A8WL28</accession>
<name>KNL1_CAEBR</name>
<organism>
    <name type="scientific">Caenorhabditis briggsae</name>
    <dbReference type="NCBI Taxonomy" id="6238"/>
    <lineage>
        <taxon>Eukaryota</taxon>
        <taxon>Metazoa</taxon>
        <taxon>Ecdysozoa</taxon>
        <taxon>Nematoda</taxon>
        <taxon>Chromadorea</taxon>
        <taxon>Rhabditida</taxon>
        <taxon>Rhabditina</taxon>
        <taxon>Rhabditomorpha</taxon>
        <taxon>Rhabditoidea</taxon>
        <taxon>Rhabditidae</taxon>
        <taxon>Peloderinae</taxon>
        <taxon>Caenorhabditis</taxon>
    </lineage>
</organism>
<gene>
    <name evidence="5" type="primary">knl-1</name>
    <name type="ORF">CBG24615</name>
</gene>
<proteinExistence type="inferred from homology"/>
<dbReference type="EMBL" id="HE601354">
    <property type="protein sequence ID" value="CAP21173.1"/>
    <property type="molecule type" value="Genomic_DNA"/>
</dbReference>
<dbReference type="SMR" id="A8WL28"/>
<dbReference type="FunCoup" id="A8WL28">
    <property type="interactions" value="153"/>
</dbReference>
<dbReference type="STRING" id="6238.A8WL28"/>
<dbReference type="EnsemblMetazoa" id="CBG24615.1">
    <property type="protein sequence ID" value="CBG24615.1"/>
    <property type="gene ID" value="WBGene00042685"/>
</dbReference>
<dbReference type="KEGG" id="cbr:CBG_24615"/>
<dbReference type="CTD" id="8583307"/>
<dbReference type="WormBase" id="CBG24615">
    <property type="protein sequence ID" value="CBP12964"/>
    <property type="gene ID" value="WBGene00042685"/>
    <property type="gene designation" value="Cbr-knl-1"/>
</dbReference>
<dbReference type="eggNOG" id="ENOG502TGNI">
    <property type="taxonomic scope" value="Eukaryota"/>
</dbReference>
<dbReference type="HOGENOM" id="CLU_296876_0_0_1"/>
<dbReference type="InParanoid" id="A8WL28"/>
<dbReference type="OMA" id="KINENCH"/>
<dbReference type="Proteomes" id="UP000008549">
    <property type="component" value="Unassembled WGS sequence"/>
</dbReference>
<dbReference type="GO" id="GO:0005938">
    <property type="term" value="C:cell cortex"/>
    <property type="evidence" value="ECO:0007669"/>
    <property type="project" value="UniProtKB-SubCell"/>
</dbReference>
<dbReference type="GO" id="GO:0000776">
    <property type="term" value="C:kinetochore"/>
    <property type="evidence" value="ECO:0000250"/>
    <property type="project" value="UniProtKB"/>
</dbReference>
<dbReference type="GO" id="GO:0008017">
    <property type="term" value="F:microtubule binding"/>
    <property type="evidence" value="ECO:0000250"/>
    <property type="project" value="UniProtKB"/>
</dbReference>
<dbReference type="GO" id="GO:0051301">
    <property type="term" value="P:cell division"/>
    <property type="evidence" value="ECO:0007669"/>
    <property type="project" value="UniProtKB-KW"/>
</dbReference>
<dbReference type="GO" id="GO:0007059">
    <property type="term" value="P:chromosome segregation"/>
    <property type="evidence" value="ECO:0007669"/>
    <property type="project" value="UniProtKB-KW"/>
</dbReference>
<dbReference type="GO" id="GO:0051321">
    <property type="term" value="P:meiotic cell cycle"/>
    <property type="evidence" value="ECO:0007669"/>
    <property type="project" value="UniProtKB-KW"/>
</dbReference>
<dbReference type="GO" id="GO:0140499">
    <property type="term" value="P:negative regulation of mitotic spindle assembly checkpoint signaling"/>
    <property type="evidence" value="ECO:0000250"/>
    <property type="project" value="UniProtKB"/>
</dbReference>
<sequence length="957" mass="105839">MDNQRKKRNSILKVRQETNLMDVLEDTTVATSSGATNRRVSFHQLKQVKNYDRAGGQIIDATPIKEKAYDTMSSDGNSTSHTTRLDMDITGLNSTPVTPKTQTPFNGSMDMSVENYDETARLFDITRDKTICVYEKTVETTTTKVVERVVRVPEGSSGANNDTLALFNMTDRAEVDMSVDGGSEGALKVDDTISVFNQTNVEPVDMDITVQKPLDDTMGVFRSPAIPTSSRIQKTSASTMDSQNMSMSMDMDITSNEMMAAFKSPKIMSSVLVAAVKDSDDMDLTGLVNTAAEDVADDTMAVFRTPTRAQTTIQKTSGEIPESVDMEMTGIGNSDAPDDTMAVFRTPTRAQQTVQKTSGEIPESVDMEMTLLALLQPVSDVKDNFDDVAMDITQQTLVGVSDDTMAVFKNPAAEKKTPGKPLFDESMEIESTIVCPDNVTFSETAQPENPAYHSSMLMSMASEVSEDVVVQKTSESLQQSSMRMSTTITEDVTASKNPESSTISEVQKIPEVVQKTSNGVEDIQNASETPEDVSMEITSEVVEGERGTMYQMSTMDVDSLQKTSLASPKIQMTSFTDTSEKMGGVSETSLIQTMMIEASESMECSEAPEDVTASPEGLTMAPEDVTVASNVSGIVSVSSISRRRRSQLQESLHRESPRRMALEKNLSMMSQMGGASEALAEFRQNKLKNQTTLLNDSVNTTIGANTSESIGRDIFKMNTSIRSPAHRSSTAPSPMVSKTLPESPKFHVTPFDAAIVNVIYLTPEDAETQEPIPEAFEFEKVLSAEESNVHKEIDTANWSISGAIKSNLDAEVMNIARGQAEMKFLELRGKFAKESNVEIAQKIQELESQNLELAGKIRDSQNLRVLQKQIEELQKPQFSLEEAERIENEYHETKVELLRAQAASIRRQHELLMTIREERRRLIHEIEEKDELLARLEEEDRKKKEEMVERVRGVMRA</sequence>